<keyword id="KW-0027">Amidation</keyword>
<keyword id="KW-0878">Amphibian defense peptide</keyword>
<keyword id="KW-0903">Direct protein sequencing</keyword>
<keyword id="KW-0964">Secreted</keyword>
<dbReference type="GO" id="GO:0005576">
    <property type="term" value="C:extracellular region"/>
    <property type="evidence" value="ECO:0000314"/>
    <property type="project" value="UniProtKB"/>
</dbReference>
<dbReference type="GO" id="GO:0006952">
    <property type="term" value="P:defense response"/>
    <property type="evidence" value="ECO:0007669"/>
    <property type="project" value="UniProtKB-KW"/>
</dbReference>
<evidence type="ECO:0000269" key="1">
    <source>
    </source>
</evidence>
<evidence type="ECO:0000305" key="2"/>
<comment type="subcellular location">
    <subcellularLocation>
        <location evidence="1">Secreted</location>
    </subcellularLocation>
</comment>
<comment type="tissue specificity">
    <text evidence="1">Expressed by the skin dorsal glands.</text>
</comment>
<comment type="developmental stage">
    <text evidence="1">Expressed during summer.</text>
</comment>
<comment type="mass spectrometry" mass="1611.0" method="Electrospray" evidence="1"/>
<comment type="similarity">
    <text evidence="2">Belongs to the frog skin active peptide (FSAP) family. Peroniin subfamily.</text>
</comment>
<organism>
    <name type="scientific">Litoria peronii</name>
    <name type="common">Emerald spotted tree frog</name>
    <name type="synonym">Hyla peronii</name>
    <dbReference type="NCBI Taxonomy" id="317363"/>
    <lineage>
        <taxon>Eukaryota</taxon>
        <taxon>Metazoa</taxon>
        <taxon>Chordata</taxon>
        <taxon>Craniata</taxon>
        <taxon>Vertebrata</taxon>
        <taxon>Euteleostomi</taxon>
        <taxon>Amphibia</taxon>
        <taxon>Batrachia</taxon>
        <taxon>Anura</taxon>
        <taxon>Neobatrachia</taxon>
        <taxon>Hyloidea</taxon>
        <taxon>Hylidae</taxon>
        <taxon>Pelodryadinae</taxon>
        <taxon>Litoria</taxon>
    </lineage>
</organism>
<protein>
    <recommendedName>
        <fullName>Peroniin-1.3a</fullName>
    </recommendedName>
</protein>
<accession>P86493</accession>
<feature type="peptide" id="PRO_0000394184" description="Peroniin-1.3a">
    <location>
        <begin position="1"/>
        <end position="13"/>
    </location>
</feature>
<feature type="modified residue" description="Valine amide" evidence="1">
    <location>
        <position position="13"/>
    </location>
</feature>
<sequence length="13" mass="1614">DAQEKRQPWLPFV</sequence>
<name>PE13A_LITPE</name>
<proteinExistence type="evidence at protein level"/>
<reference evidence="2" key="1">
    <citation type="journal article" date="2009" name="Rapid Commun. Mass Spectrom.">
        <title>The host-defence skin peptide profiles of Peron's Tree Frog Litoria peronii in winter and summer. Sequence determination by electrospray mass spectrometry and activities of the peptides.</title>
        <authorList>
            <person name="Bilusich D."/>
            <person name="Jackway R.J."/>
            <person name="Musgrave I.F."/>
            <person name="Tyler M.J."/>
            <person name="Bowie J.H."/>
        </authorList>
    </citation>
    <scope>PROTEIN SEQUENCE</scope>
    <scope>SUBCELLULAR LOCATION</scope>
    <scope>TISSUE SPECIFICITY</scope>
    <scope>DEVELOPMENTAL STAGE</scope>
    <scope>MASS SPECTROMETRY</scope>
    <scope>AMIDATION AT VAL-13</scope>
    <source>
        <tissue evidence="1">Skin secretion</tissue>
    </source>
</reference>